<feature type="chain" id="PRO_0000288613" description="Alpha-1,6-mannosylglycoprotein 6-beta-N-acetylglucosaminyltransferase">
    <location>
        <begin position="1"/>
        <end position="669"/>
    </location>
</feature>
<feature type="topological domain" description="Cytoplasmic" evidence="2">
    <location>
        <begin position="1"/>
        <end position="7"/>
    </location>
</feature>
<feature type="transmembrane region" description="Helical; Signal-anchor for type II membrane protein" evidence="2">
    <location>
        <begin position="8"/>
        <end position="28"/>
    </location>
</feature>
<feature type="topological domain" description="Lumenal" evidence="2">
    <location>
        <begin position="29"/>
        <end position="669"/>
    </location>
</feature>
<feature type="glycosylation site" description="N-linked (GlcNAc...) asparagine" evidence="2">
    <location>
        <position position="30"/>
    </location>
</feature>
<feature type="glycosylation site" description="N-linked (GlcNAc...) asparagine" evidence="2">
    <location>
        <position position="412"/>
    </location>
</feature>
<feature type="glycosylation site" description="N-linked (GlcNAc...) asparagine" evidence="2">
    <location>
        <position position="437"/>
    </location>
</feature>
<feature type="glycosylation site" description="N-linked (GlcNAc...) asparagine" evidence="2">
    <location>
        <position position="626"/>
    </location>
</feature>
<feature type="mutagenesis site" description="Loss of function." evidence="3">
    <original>L</original>
    <variation>R</variation>
    <location>
        <position position="116"/>
    </location>
</feature>
<name>GLY2_CAEEL</name>
<sequence>MRRRHRCVALLFIFSAFITPLGFFYYTISNESKRYSEESEKNYGYQTLEFTESPEEISVDFDKYSQSECSRFPSNVEIEYPECLNKMKWIKNGWKTHHCYIENHIDGSECSFRYYLSQVENYCPPMEHHGKRKGLAKISPSIRRLLPIFESIPHYMKTRINRLWKKWKEGAHEVMQKYPKSMIERRKLNVLVFIGFLANEQKLNMAKKSDHGGPLGELLQWSDLLATLSVIGHHLEVSTNKNTLRNIVWKYMSRGPCQYVNNFRQQLDIIFTDIMGFNILRQHHRQFLLSNRCRIRLLDSFGTHAEFTTKTYFVQNKKSLSGPFSQRNPWGGHGLDLRQHWTFYPHSDDNTFLGFVVDTEGIDKKNNQMIPSALVYGKEQYMWRDAEKPIDVLKRIVTVHSTVADLDLKDSNISSIFKKVQNHGFLNSEEISQLLDNITIFFGLGFPLEGPAPLEAMAHGAVFINAKFKEPKSRLNYKFLAEKPTLRKWTSQNPYMEKIGEPHVITVDIFNELELEEAIKRAISLKPKHFVPFEFTPAGMLHRVALLLEKQELCDKIAYSKRWPPIDQMKIFRTLNADDSCETICHSKQLLCEPSYFPIINSSPLLRRENLCSSTTSDSSPFAPFNCTIQQSAFLFSCASSPPISFEINRLCPCRDYIPEQHAICKKCL</sequence>
<evidence type="ECO:0000250" key="1"/>
<evidence type="ECO:0000255" key="2"/>
<evidence type="ECO:0000269" key="3">
    <source>
    </source>
</evidence>
<evidence type="ECO:0000305" key="4"/>
<protein>
    <recommendedName>
        <fullName>Alpha-1,6-mannosylglycoprotein 6-beta-N-acetylglucosaminyltransferase</fullName>
        <ecNumber>2.4.1.155</ecNumber>
    </recommendedName>
    <alternativeName>
        <fullName>GlcNAc-TV</fullName>
    </alternativeName>
    <alternativeName>
        <fullName>Glycosylation-related protein 2</fullName>
    </alternativeName>
    <alternativeName>
        <fullName>N-acetylglucosaminyltransferase gly-2</fullName>
    </alternativeName>
</protein>
<dbReference type="EC" id="2.4.1.155"/>
<dbReference type="EMBL" id="AF154122">
    <property type="protein sequence ID" value="AAF74523.1"/>
    <property type="molecule type" value="mRNA"/>
</dbReference>
<dbReference type="EMBL" id="AY037800">
    <property type="protein sequence ID" value="AAK94765.1"/>
    <property type="molecule type" value="mRNA"/>
</dbReference>
<dbReference type="EMBL" id="AY037802">
    <property type="protein sequence ID" value="AAK94767.1"/>
    <property type="molecule type" value="mRNA"/>
</dbReference>
<dbReference type="EMBL" id="FO080958">
    <property type="protein sequence ID" value="CCD68089.1"/>
    <property type="molecule type" value="Genomic_DNA"/>
</dbReference>
<dbReference type="RefSeq" id="NP_491874.1">
    <property type="nucleotide sequence ID" value="NM_059473.9"/>
</dbReference>
<dbReference type="SMR" id="Q9NDH7"/>
<dbReference type="BioGRID" id="37811">
    <property type="interactions" value="1"/>
</dbReference>
<dbReference type="FunCoup" id="Q9NDH7">
    <property type="interactions" value="388"/>
</dbReference>
<dbReference type="STRING" id="6239.C55B7.2.1"/>
<dbReference type="CAZy" id="GT18">
    <property type="family name" value="Glycosyltransferase Family 18"/>
</dbReference>
<dbReference type="GlyCosmos" id="Q9NDH7">
    <property type="glycosylation" value="4 sites, No reported glycans"/>
</dbReference>
<dbReference type="PaxDb" id="6239-C55B7.2"/>
<dbReference type="EnsemblMetazoa" id="C55B7.2.1">
    <property type="protein sequence ID" value="C55B7.2.1"/>
    <property type="gene ID" value="WBGene00001627"/>
</dbReference>
<dbReference type="GeneID" id="172360"/>
<dbReference type="KEGG" id="cel:CELE_C55B7.2"/>
<dbReference type="UCSC" id="C55B7.2.1">
    <property type="organism name" value="c. elegans"/>
</dbReference>
<dbReference type="AGR" id="WB:WBGene00001627"/>
<dbReference type="CTD" id="172360"/>
<dbReference type="WormBase" id="C55B7.2">
    <property type="protein sequence ID" value="CE27887"/>
    <property type="gene ID" value="WBGene00001627"/>
    <property type="gene designation" value="gly-2"/>
</dbReference>
<dbReference type="eggNOG" id="ENOG502QTNG">
    <property type="taxonomic scope" value="Eukaryota"/>
</dbReference>
<dbReference type="GeneTree" id="ENSGT00940000153470"/>
<dbReference type="HOGENOM" id="CLU_016749_1_0_1"/>
<dbReference type="InParanoid" id="Q9NDH7"/>
<dbReference type="OMA" id="IGHHLEV"/>
<dbReference type="OrthoDB" id="2113294at2759"/>
<dbReference type="PhylomeDB" id="Q9NDH7"/>
<dbReference type="Reactome" id="R-CEL-975577">
    <property type="pathway name" value="N-Glycan antennae elongation"/>
</dbReference>
<dbReference type="UniPathway" id="UPA00378"/>
<dbReference type="PRO" id="PR:Q9NDH7"/>
<dbReference type="Proteomes" id="UP000001940">
    <property type="component" value="Chromosome I"/>
</dbReference>
<dbReference type="Bgee" id="WBGene00001627">
    <property type="expression patterns" value="Expressed in pharyngeal muscle cell (C elegans) and 3 other cell types or tissues"/>
</dbReference>
<dbReference type="GO" id="GO:0005794">
    <property type="term" value="C:Golgi apparatus"/>
    <property type="evidence" value="ECO:0000318"/>
    <property type="project" value="GO_Central"/>
</dbReference>
<dbReference type="GO" id="GO:0000139">
    <property type="term" value="C:Golgi membrane"/>
    <property type="evidence" value="ECO:0007669"/>
    <property type="project" value="UniProtKB-SubCell"/>
</dbReference>
<dbReference type="GO" id="GO:0005795">
    <property type="term" value="C:Golgi stack"/>
    <property type="evidence" value="ECO:0000304"/>
    <property type="project" value="WormBase"/>
</dbReference>
<dbReference type="GO" id="GO:0005634">
    <property type="term" value="C:nucleus"/>
    <property type="evidence" value="ECO:0000314"/>
    <property type="project" value="WormBase"/>
</dbReference>
<dbReference type="GO" id="GO:0030144">
    <property type="term" value="F:alpha-1,6-mannosylglycoprotein 6-beta-N-acetylglucosaminyltransferase activity"/>
    <property type="evidence" value="ECO:0000318"/>
    <property type="project" value="GO_Central"/>
</dbReference>
<dbReference type="GO" id="GO:0005516">
    <property type="term" value="F:calmodulin binding"/>
    <property type="evidence" value="ECO:0000353"/>
    <property type="project" value="WormBase"/>
</dbReference>
<dbReference type="GO" id="GO:0016758">
    <property type="term" value="F:hexosyltransferase activity"/>
    <property type="evidence" value="ECO:0000314"/>
    <property type="project" value="WormBase"/>
</dbReference>
<dbReference type="GO" id="GO:0046872">
    <property type="term" value="F:metal ion binding"/>
    <property type="evidence" value="ECO:0007669"/>
    <property type="project" value="UniProtKB-KW"/>
</dbReference>
<dbReference type="GO" id="GO:0006487">
    <property type="term" value="P:protein N-linked glycosylation"/>
    <property type="evidence" value="ECO:0000314"/>
    <property type="project" value="WormBase"/>
</dbReference>
<dbReference type="InterPro" id="IPR026116">
    <property type="entry name" value="GT18_cat"/>
</dbReference>
<dbReference type="InterPro" id="IPR052105">
    <property type="entry name" value="MGAT5_Glycosyltransferase"/>
</dbReference>
<dbReference type="PANTHER" id="PTHR15075:SF2">
    <property type="entry name" value="ALPHA-1,6-MANNOSYLGLYCOPROTEIN 6-BETA-N-ACETYLGLUCOSAMINYLTRANSFERASE"/>
    <property type="match status" value="1"/>
</dbReference>
<dbReference type="PANTHER" id="PTHR15075">
    <property type="entry name" value="ALPHA-MANNOSIDE BETA-1,6-N-ACETYLGLUCOSAMINYLTRANSFERASE"/>
    <property type="match status" value="1"/>
</dbReference>
<dbReference type="Pfam" id="PF15024">
    <property type="entry name" value="Glyco_transf_18"/>
    <property type="match status" value="1"/>
</dbReference>
<comment type="function">
    <text evidence="3">Catalyzes the addition of N-acetylglucosamine (GlcNAc) in beta 1-6 linkage to the alpha-linked mannose of biantennary N-linked oligosaccharides.</text>
</comment>
<comment type="catalytic activity">
    <reaction>
        <text>N(4)-{beta-D-GlcNAc-(1-&gt;2)-[beta-D-GlcNAc-(1-&gt;4)]-alpha-D-Man-(1-&gt;3)-[beta-D-GlcNAc-(1-&gt;2)-alpha-D-Man-(1-&gt;6)]-beta-D-Man-(1-&gt;4)-beta-D-GlcNAc-(1-&gt;4)-beta-D-GlcNAc}-L-asparaginyl-[protein] + UDP-N-acetyl-alpha-D-glucosamine = N(4)-{beta-D-GlcNAc-(1-&gt;2)-[beta-D-GlcNAc-(1-&gt;4)]-alpha-D-Man-(1-&gt;3)-[beta-D-GlcNAc-(1-&gt;2)-[beta-D-GlcNAc-(1-&gt;6)]-alpha-D-Man-(1-&gt;6)]-beta-D-Man-(1-&gt;4)-beta-D-GlcNAc-(1-&gt;4)-beta-D-GlcNAc}-L-asparaginyl-[protein] + UDP + H(+)</text>
        <dbReference type="Rhea" id="RHEA:16921"/>
        <dbReference type="Rhea" id="RHEA-COMP:14374"/>
        <dbReference type="Rhea" id="RHEA-COMP:14377"/>
        <dbReference type="ChEBI" id="CHEBI:15378"/>
        <dbReference type="ChEBI" id="CHEBI:57705"/>
        <dbReference type="ChEBI" id="CHEBI:58223"/>
        <dbReference type="ChEBI" id="CHEBI:139507"/>
        <dbReference type="ChEBI" id="CHEBI:139510"/>
        <dbReference type="EC" id="2.4.1.155"/>
    </reaction>
</comment>
<comment type="pathway">
    <text>Protein modification; protein glycosylation.</text>
</comment>
<comment type="subcellular location">
    <subcellularLocation>
        <location evidence="1">Golgi apparatus membrane</location>
        <topology evidence="1">Single-pass type II membrane protein</topology>
    </subcellularLocation>
</comment>
<comment type="tissue specificity">
    <text evidence="3">Expressed in a complex subset of neurons in larvae and in the spermathecal and pharyngeal-intestinal valves and certain vulval cells of adults.</text>
</comment>
<comment type="developmental stage">
    <text evidence="3">In embryos, expressed from the late comma stage.</text>
</comment>
<comment type="similarity">
    <text evidence="4">Belongs to the glycosyltransferase 18 family.</text>
</comment>
<gene>
    <name type="primary">gly-2</name>
    <name type="ORF">C55B7.2</name>
</gene>
<organism>
    <name type="scientific">Caenorhabditis elegans</name>
    <dbReference type="NCBI Taxonomy" id="6239"/>
    <lineage>
        <taxon>Eukaryota</taxon>
        <taxon>Metazoa</taxon>
        <taxon>Ecdysozoa</taxon>
        <taxon>Nematoda</taxon>
        <taxon>Chromadorea</taxon>
        <taxon>Rhabditida</taxon>
        <taxon>Rhabditina</taxon>
        <taxon>Rhabditomorpha</taxon>
        <taxon>Rhabditoidea</taxon>
        <taxon>Rhabditidae</taxon>
        <taxon>Peloderinae</taxon>
        <taxon>Caenorhabditis</taxon>
    </lineage>
</organism>
<accession>Q9NDH7</accession>
<accession>Q962C0</accession>
<reference key="1">
    <citation type="journal article" date="2002" name="J. Biol. Chem.">
        <title>The Caenorhabditis elegans gene, gly-2, can rescue the N-acetylglucosaminyltransferase V mutation of Lec4 cells.</title>
        <authorList>
            <person name="Warren C.E."/>
            <person name="Krizus A."/>
            <person name="Roy P.J."/>
            <person name="Culotti J.G."/>
            <person name="Dennis J.W."/>
        </authorList>
    </citation>
    <scope>NUCLEOTIDE SEQUENCE [MRNA]</scope>
    <scope>FUNCTION</scope>
    <scope>TISSUE SPECIFICITY</scope>
    <scope>DEVELOPMENTAL STAGE</scope>
    <scope>MUTAGENESIS OF LEU-116</scope>
    <source>
        <strain>Bristol N2</strain>
    </source>
</reference>
<reference key="2">
    <citation type="journal article" date="1998" name="Science">
        <title>Genome sequence of the nematode C. elegans: a platform for investigating biology.</title>
        <authorList>
            <consortium name="The C. elegans sequencing consortium"/>
        </authorList>
    </citation>
    <scope>NUCLEOTIDE SEQUENCE [LARGE SCALE GENOMIC DNA]</scope>
    <source>
        <strain>Bristol N2</strain>
    </source>
</reference>
<proteinExistence type="evidence at protein level"/>
<keyword id="KW-0325">Glycoprotein</keyword>
<keyword id="KW-0328">Glycosyltransferase</keyword>
<keyword id="KW-0333">Golgi apparatus</keyword>
<keyword id="KW-0472">Membrane</keyword>
<keyword id="KW-0479">Metal-binding</keyword>
<keyword id="KW-1185">Reference proteome</keyword>
<keyword id="KW-0735">Signal-anchor</keyword>
<keyword id="KW-0808">Transferase</keyword>
<keyword id="KW-0812">Transmembrane</keyword>
<keyword id="KW-1133">Transmembrane helix</keyword>